<gene>
    <name type="primary">MT-ND4L</name>
    <name type="synonym">MTND4L</name>
    <name type="synonym">NADH4L</name>
    <name type="synonym">ND4L</name>
</gene>
<feature type="chain" id="PRO_0000118479" description="NADH-ubiquinone oxidoreductase chain 4L">
    <location>
        <begin position="1"/>
        <end position="98"/>
    </location>
</feature>
<feature type="transmembrane region" description="Helical" evidence="3">
    <location>
        <begin position="2"/>
        <end position="22"/>
    </location>
</feature>
<feature type="transmembrane region" description="Helical" evidence="3">
    <location>
        <begin position="29"/>
        <end position="49"/>
    </location>
</feature>
<feature type="transmembrane region" description="Helical" evidence="3">
    <location>
        <begin position="61"/>
        <end position="81"/>
    </location>
</feature>
<comment type="function">
    <text evidence="1">Core subunit of the mitochondrial membrane respiratory chain NADH dehydrogenase (Complex I) which catalyzes electron transfer from NADH through the respiratory chain, using ubiquinone as an electron acceptor. Part of the enzyme membrane arm which is embedded in the lipid bilayer and involved in proton translocation.</text>
</comment>
<comment type="catalytic activity">
    <reaction evidence="1">
        <text>a ubiquinone + NADH + 5 H(+)(in) = a ubiquinol + NAD(+) + 4 H(+)(out)</text>
        <dbReference type="Rhea" id="RHEA:29091"/>
        <dbReference type="Rhea" id="RHEA-COMP:9565"/>
        <dbReference type="Rhea" id="RHEA-COMP:9566"/>
        <dbReference type="ChEBI" id="CHEBI:15378"/>
        <dbReference type="ChEBI" id="CHEBI:16389"/>
        <dbReference type="ChEBI" id="CHEBI:17976"/>
        <dbReference type="ChEBI" id="CHEBI:57540"/>
        <dbReference type="ChEBI" id="CHEBI:57945"/>
        <dbReference type="EC" id="7.1.1.2"/>
    </reaction>
    <physiologicalReaction direction="left-to-right" evidence="1">
        <dbReference type="Rhea" id="RHEA:29092"/>
    </physiologicalReaction>
</comment>
<comment type="subunit">
    <text evidence="2">Core subunit of respiratory chain NADH dehydrogenase (Complex I) which is composed of 45 different subunits.</text>
</comment>
<comment type="subcellular location">
    <subcellularLocation>
        <location evidence="2">Mitochondrion inner membrane</location>
        <topology evidence="3">Multi-pass membrane protein</topology>
    </subcellularLocation>
</comment>
<comment type="similarity">
    <text evidence="4">Belongs to the complex I subunit 4L family.</text>
</comment>
<proteinExistence type="inferred from homology"/>
<protein>
    <recommendedName>
        <fullName>NADH-ubiquinone oxidoreductase chain 4L</fullName>
        <ecNumber>7.1.1.2</ecNumber>
    </recommendedName>
    <alternativeName>
        <fullName>NADH dehydrogenase subunit 4L</fullName>
    </alternativeName>
</protein>
<evidence type="ECO:0000250" key="1">
    <source>
        <dbReference type="UniProtKB" id="P03901"/>
    </source>
</evidence>
<evidence type="ECO:0000250" key="2">
    <source>
        <dbReference type="UniProtKB" id="P03902"/>
    </source>
</evidence>
<evidence type="ECO:0000255" key="3"/>
<evidence type="ECO:0000305" key="4"/>
<organism>
    <name type="scientific">Propithecus diadema diadema</name>
    <name type="common">Diademed sifaka</name>
    <dbReference type="NCBI Taxonomy" id="171945"/>
    <lineage>
        <taxon>Eukaryota</taxon>
        <taxon>Metazoa</taxon>
        <taxon>Chordata</taxon>
        <taxon>Craniata</taxon>
        <taxon>Vertebrata</taxon>
        <taxon>Euteleostomi</taxon>
        <taxon>Mammalia</taxon>
        <taxon>Eutheria</taxon>
        <taxon>Euarchontoglires</taxon>
        <taxon>Primates</taxon>
        <taxon>Strepsirrhini</taxon>
        <taxon>Lemuriformes</taxon>
        <taxon>Indriidae</taxon>
        <taxon>Propithecus</taxon>
    </lineage>
</organism>
<keyword id="KW-0249">Electron transport</keyword>
<keyword id="KW-0472">Membrane</keyword>
<keyword id="KW-0496">Mitochondrion</keyword>
<keyword id="KW-0999">Mitochondrion inner membrane</keyword>
<keyword id="KW-0520">NAD</keyword>
<keyword id="KW-0679">Respiratory chain</keyword>
<keyword id="KW-1278">Translocase</keyword>
<keyword id="KW-0812">Transmembrane</keyword>
<keyword id="KW-1133">Transmembrane helix</keyword>
<keyword id="KW-0813">Transport</keyword>
<keyword id="KW-0830">Ubiquinone</keyword>
<reference key="1">
    <citation type="journal article" date="2003" name="Proc. Natl. Acad. Sci. U.S.A.">
        <title>A molecular approach to comparative phylogeography of extant Malagasy lemurs.</title>
        <authorList>
            <person name="Pastorini J."/>
            <person name="Thalmann U."/>
            <person name="Martin R.D."/>
        </authorList>
    </citation>
    <scope>NUCLEOTIDE SEQUENCE [GENOMIC DNA]</scope>
</reference>
<sequence>MPSIFTNIILAFATALLGTLVFRSHLMSSLLCLEGMMLSMFVLSTLIILNMHFTMSFMMPILLLVFAACEAAVGLALLVMVSNTYGLDYIQNLNLLQC</sequence>
<name>NU4LM_PRODD</name>
<dbReference type="EC" id="7.1.1.2"/>
<dbReference type="EMBL" id="AF224599">
    <property type="protein sequence ID" value="AAG54015.1"/>
    <property type="molecule type" value="Genomic_DNA"/>
</dbReference>
<dbReference type="SMR" id="Q9B8T5"/>
<dbReference type="GO" id="GO:0005743">
    <property type="term" value="C:mitochondrial inner membrane"/>
    <property type="evidence" value="ECO:0000250"/>
    <property type="project" value="UniProtKB"/>
</dbReference>
<dbReference type="GO" id="GO:0045271">
    <property type="term" value="C:respiratory chain complex I"/>
    <property type="evidence" value="ECO:0000250"/>
    <property type="project" value="UniProtKB"/>
</dbReference>
<dbReference type="GO" id="GO:0008137">
    <property type="term" value="F:NADH dehydrogenase (ubiquinone) activity"/>
    <property type="evidence" value="ECO:0000250"/>
    <property type="project" value="UniProtKB"/>
</dbReference>
<dbReference type="GO" id="GO:0042773">
    <property type="term" value="P:ATP synthesis coupled electron transport"/>
    <property type="evidence" value="ECO:0007669"/>
    <property type="project" value="InterPro"/>
</dbReference>
<dbReference type="FunFam" id="1.10.287.3510:FF:000002">
    <property type="entry name" value="NADH-ubiquinone oxidoreductase chain 4L"/>
    <property type="match status" value="1"/>
</dbReference>
<dbReference type="Gene3D" id="1.10.287.3510">
    <property type="match status" value="1"/>
</dbReference>
<dbReference type="InterPro" id="IPR001133">
    <property type="entry name" value="NADH_UbQ_OxRdtase_chain4L/K"/>
</dbReference>
<dbReference type="InterPro" id="IPR039428">
    <property type="entry name" value="NUOK/Mnh_C1-like"/>
</dbReference>
<dbReference type="PANTHER" id="PTHR11434:SF0">
    <property type="entry name" value="NADH-UBIQUINONE OXIDOREDUCTASE CHAIN 4L"/>
    <property type="match status" value="1"/>
</dbReference>
<dbReference type="PANTHER" id="PTHR11434">
    <property type="entry name" value="NADH-UBIQUINONE OXIDOREDUCTASE SUBUNIT ND4L"/>
    <property type="match status" value="1"/>
</dbReference>
<dbReference type="Pfam" id="PF00420">
    <property type="entry name" value="Oxidored_q2"/>
    <property type="match status" value="1"/>
</dbReference>
<accession>Q9B8T5</accession>
<geneLocation type="mitochondrion"/>